<keyword id="KW-0067">ATP-binding</keyword>
<keyword id="KW-0150">Chloroplast</keyword>
<keyword id="KW-0275">Fatty acid biosynthesis</keyword>
<keyword id="KW-0276">Fatty acid metabolism</keyword>
<keyword id="KW-0444">Lipid biosynthesis</keyword>
<keyword id="KW-0443">Lipid metabolism</keyword>
<keyword id="KW-0479">Metal-binding</keyword>
<keyword id="KW-0547">Nucleotide-binding</keyword>
<keyword id="KW-0934">Plastid</keyword>
<keyword id="KW-0808">Transferase</keyword>
<keyword id="KW-0862">Zinc</keyword>
<keyword id="KW-0863">Zinc-finger</keyword>
<proteinExistence type="inferred from homology"/>
<dbReference type="EC" id="2.1.3.15" evidence="2"/>
<dbReference type="EMBL" id="AP009367">
    <property type="protein sequence ID" value="BAF49863.1"/>
    <property type="molecule type" value="Genomic_DNA"/>
</dbReference>
<dbReference type="RefSeq" id="YP_001123039.1">
    <property type="nucleotide sequence ID" value="NC_009266.1"/>
</dbReference>
<dbReference type="SMR" id="A4QJK8"/>
<dbReference type="GeneID" id="4962287"/>
<dbReference type="UniPathway" id="UPA00655">
    <property type="reaction ID" value="UER00711"/>
</dbReference>
<dbReference type="GO" id="GO:0009317">
    <property type="term" value="C:acetyl-CoA carboxylase complex"/>
    <property type="evidence" value="ECO:0007669"/>
    <property type="project" value="InterPro"/>
</dbReference>
<dbReference type="GO" id="GO:0009570">
    <property type="term" value="C:chloroplast stroma"/>
    <property type="evidence" value="ECO:0007669"/>
    <property type="project" value="UniProtKB-SubCell"/>
</dbReference>
<dbReference type="GO" id="GO:0003989">
    <property type="term" value="F:acetyl-CoA carboxylase activity"/>
    <property type="evidence" value="ECO:0007669"/>
    <property type="project" value="InterPro"/>
</dbReference>
<dbReference type="GO" id="GO:0005524">
    <property type="term" value="F:ATP binding"/>
    <property type="evidence" value="ECO:0007669"/>
    <property type="project" value="UniProtKB-KW"/>
</dbReference>
<dbReference type="GO" id="GO:0016743">
    <property type="term" value="F:carboxyl- or carbamoyltransferase activity"/>
    <property type="evidence" value="ECO:0007669"/>
    <property type="project" value="UniProtKB-UniRule"/>
</dbReference>
<dbReference type="GO" id="GO:0008270">
    <property type="term" value="F:zinc ion binding"/>
    <property type="evidence" value="ECO:0007669"/>
    <property type="project" value="UniProtKB-UniRule"/>
</dbReference>
<dbReference type="GO" id="GO:0006633">
    <property type="term" value="P:fatty acid biosynthetic process"/>
    <property type="evidence" value="ECO:0007669"/>
    <property type="project" value="UniProtKB-KW"/>
</dbReference>
<dbReference type="GO" id="GO:2001295">
    <property type="term" value="P:malonyl-CoA biosynthetic process"/>
    <property type="evidence" value="ECO:0007669"/>
    <property type="project" value="UniProtKB-UniRule"/>
</dbReference>
<dbReference type="Gene3D" id="3.90.226.10">
    <property type="entry name" value="2-enoyl-CoA Hydratase, Chain A, domain 1"/>
    <property type="match status" value="1"/>
</dbReference>
<dbReference type="HAMAP" id="MF_01395">
    <property type="entry name" value="AcetylCoA_CT_beta"/>
    <property type="match status" value="1"/>
</dbReference>
<dbReference type="InterPro" id="IPR034733">
    <property type="entry name" value="AcCoA_carboxyl_beta"/>
</dbReference>
<dbReference type="InterPro" id="IPR000438">
    <property type="entry name" value="Acetyl_CoA_COase_Trfase_b_su"/>
</dbReference>
<dbReference type="InterPro" id="IPR029045">
    <property type="entry name" value="ClpP/crotonase-like_dom_sf"/>
</dbReference>
<dbReference type="InterPro" id="IPR011762">
    <property type="entry name" value="COA_CT_N"/>
</dbReference>
<dbReference type="NCBIfam" id="TIGR00515">
    <property type="entry name" value="accD"/>
    <property type="match status" value="1"/>
</dbReference>
<dbReference type="PANTHER" id="PTHR42995">
    <property type="entry name" value="ACETYL-COENZYME A CARBOXYLASE CARBOXYL TRANSFERASE SUBUNIT BETA, CHLOROPLASTIC"/>
    <property type="match status" value="1"/>
</dbReference>
<dbReference type="PANTHER" id="PTHR42995:SF5">
    <property type="entry name" value="ACETYL-COENZYME A CARBOXYLASE CARBOXYL TRANSFERASE SUBUNIT BETA, CHLOROPLASTIC"/>
    <property type="match status" value="1"/>
</dbReference>
<dbReference type="Pfam" id="PF01039">
    <property type="entry name" value="Carboxyl_trans"/>
    <property type="match status" value="1"/>
</dbReference>
<dbReference type="PRINTS" id="PR01070">
    <property type="entry name" value="ACCCTRFRASEB"/>
</dbReference>
<dbReference type="SUPFAM" id="SSF52096">
    <property type="entry name" value="ClpP/crotonase"/>
    <property type="match status" value="1"/>
</dbReference>
<dbReference type="PROSITE" id="PS50980">
    <property type="entry name" value="COA_CT_NTER"/>
    <property type="match status" value="1"/>
</dbReference>
<reference key="1">
    <citation type="submission" date="2007-03" db="EMBL/GenBank/DDBJ databases">
        <title>Sequencing analysis of Aethionema grandiflorum chloroplast DNA.</title>
        <authorList>
            <person name="Hosouchi T."/>
            <person name="Tsuruoka H."/>
            <person name="Kotani H."/>
        </authorList>
    </citation>
    <scope>NUCLEOTIDE SEQUENCE [LARGE SCALE GENOMIC DNA]</scope>
</reference>
<evidence type="ECO:0000250" key="1"/>
<evidence type="ECO:0000255" key="2">
    <source>
        <dbReference type="HAMAP-Rule" id="MF_01395"/>
    </source>
</evidence>
<evidence type="ECO:0000255" key="3">
    <source>
        <dbReference type="PROSITE-ProRule" id="PRU01136"/>
    </source>
</evidence>
<comment type="function">
    <text evidence="2">Component of the acetyl coenzyme A carboxylase (ACC) complex. Biotin carboxylase (BC) catalyzes the carboxylation of biotin on its carrier protein (BCCP) and then the CO(2) group is transferred by the transcarboxylase to acetyl-CoA to form malonyl-CoA.</text>
</comment>
<comment type="catalytic activity">
    <reaction evidence="2">
        <text>N(6)-carboxybiotinyl-L-lysyl-[protein] + acetyl-CoA = N(6)-biotinyl-L-lysyl-[protein] + malonyl-CoA</text>
        <dbReference type="Rhea" id="RHEA:54728"/>
        <dbReference type="Rhea" id="RHEA-COMP:10505"/>
        <dbReference type="Rhea" id="RHEA-COMP:10506"/>
        <dbReference type="ChEBI" id="CHEBI:57288"/>
        <dbReference type="ChEBI" id="CHEBI:57384"/>
        <dbReference type="ChEBI" id="CHEBI:83144"/>
        <dbReference type="ChEBI" id="CHEBI:83145"/>
        <dbReference type="EC" id="2.1.3.15"/>
    </reaction>
</comment>
<comment type="cofactor">
    <cofactor evidence="2">
        <name>Zn(2+)</name>
        <dbReference type="ChEBI" id="CHEBI:29105"/>
    </cofactor>
    <text evidence="2">Binds 1 zinc ion per subunit.</text>
</comment>
<comment type="pathway">
    <text evidence="2">Lipid metabolism; malonyl-CoA biosynthesis; malonyl-CoA from acetyl-CoA: step 1/1.</text>
</comment>
<comment type="subunit">
    <text evidence="1">Acetyl-CoA carboxylase is a heterohexamer composed of biotin carboxyl carrier protein, biotin carboxylase and 2 subunits each of ACCase subunit alpha and ACCase plastid-coded subunit beta (accD).</text>
</comment>
<comment type="subcellular location">
    <subcellularLocation>
        <location evidence="2">Plastid</location>
        <location evidence="2">Chloroplast stroma</location>
    </subcellularLocation>
</comment>
<comment type="similarity">
    <text evidence="2">Belongs to the AccD/PCCB family.</text>
</comment>
<organism>
    <name type="scientific">Aethionema grandiflorum</name>
    <name type="common">Persian stone-cress</name>
    <dbReference type="NCBI Taxonomy" id="72657"/>
    <lineage>
        <taxon>Eukaryota</taxon>
        <taxon>Viridiplantae</taxon>
        <taxon>Streptophyta</taxon>
        <taxon>Embryophyta</taxon>
        <taxon>Tracheophyta</taxon>
        <taxon>Spermatophyta</taxon>
        <taxon>Magnoliopsida</taxon>
        <taxon>eudicotyledons</taxon>
        <taxon>Gunneridae</taxon>
        <taxon>Pentapetalae</taxon>
        <taxon>rosids</taxon>
        <taxon>malvids</taxon>
        <taxon>Brassicales</taxon>
        <taxon>Brassicaceae</taxon>
        <taxon>Aethionemeae</taxon>
        <taxon>Aethionema</taxon>
    </lineage>
</organism>
<feature type="chain" id="PRO_0000359119" description="Acetyl-coenzyme A carboxylase carboxyl transferase subunit beta, chloroplastic">
    <location>
        <begin position="1"/>
        <end position="488"/>
    </location>
</feature>
<feature type="domain" description="CoA carboxyltransferase N-terminal" evidence="3">
    <location>
        <begin position="221"/>
        <end position="488"/>
    </location>
</feature>
<feature type="zinc finger region" description="C4-type" evidence="2">
    <location>
        <begin position="225"/>
        <end position="247"/>
    </location>
</feature>
<feature type="binding site" evidence="2">
    <location>
        <position position="225"/>
    </location>
    <ligand>
        <name>Zn(2+)</name>
        <dbReference type="ChEBI" id="CHEBI:29105"/>
    </ligand>
</feature>
<feature type="binding site" evidence="2">
    <location>
        <position position="228"/>
    </location>
    <ligand>
        <name>Zn(2+)</name>
        <dbReference type="ChEBI" id="CHEBI:29105"/>
    </ligand>
</feature>
<feature type="binding site" evidence="2">
    <location>
        <position position="244"/>
    </location>
    <ligand>
        <name>Zn(2+)</name>
        <dbReference type="ChEBI" id="CHEBI:29105"/>
    </ligand>
</feature>
<feature type="binding site" evidence="2">
    <location>
        <position position="247"/>
    </location>
    <ligand>
        <name>Zn(2+)</name>
        <dbReference type="ChEBI" id="CHEBI:29105"/>
    </ligand>
</feature>
<sequence>MEKSWFNFLFSKGELEYRCELSKSMDSFAPIEKTPISQDRAIYDTDKNLYDWGERSSYYNNVDLLVSSKDIRNFISDDTFFVRDSNKNSYSIYFDIQNQKFEIGNGLSDLEVFFYSYRSSSYLNNRSKSDNDPHYDPSIKDTKYDCNNHINSCIDSYFRSHICIDSHFLSDSKNYNESYIYNLICSKSEKIRESQNCKIRTNMNRSDLIQDFDITQNYNQLWIQCDNCYALIYKKALKLKLNVCEQCGYYLKISSSDRIELSIDPGTWNPMDEDMVSTDPIQFHSREEPYQNRIDSAQKKTGLTDAVQTGTGQLNGIPVALGVMDFQFMGGSMGSVVGEKITRLIEYATTEFLPLILVCSSGGARMQEGSLSLMQMAKISSVLCDYQSSKKLFYISILTSPTTGGVTASFGMLGDIIIAEPYAYIAFAGKRVIEQTLKKAVPEGSQAAESLLRKGLLDAIVPRNLLKGVLTELFQLHAFFPLNKNEIK</sequence>
<name>ACCD_AETGR</name>
<geneLocation type="chloroplast"/>
<accession>A4QJK8</accession>
<protein>
    <recommendedName>
        <fullName evidence="2">Acetyl-coenzyme A carboxylase carboxyl transferase subunit beta, chloroplastic</fullName>
        <shortName evidence="2">ACCase subunit beta</shortName>
        <shortName evidence="2">Acetyl-CoA carboxylase carboxyltransferase subunit beta</shortName>
        <ecNumber evidence="2">2.1.3.15</ecNumber>
    </recommendedName>
</protein>
<gene>
    <name evidence="2" type="primary">accD</name>
</gene>